<sequence>MKQPSLDILLSKVDSKYTLVLAAAKRARTLMEDPEFEVNYRGSKPVSLAFDEIAKGKYHFELTREGIK</sequence>
<gene>
    <name evidence="1" type="primary">rpoZ</name>
    <name type="ordered locus">DSY2728</name>
</gene>
<evidence type="ECO:0000255" key="1">
    <source>
        <dbReference type="HAMAP-Rule" id="MF_00366"/>
    </source>
</evidence>
<name>RPOZ_DESHY</name>
<protein>
    <recommendedName>
        <fullName evidence="1">DNA-directed RNA polymerase subunit omega</fullName>
        <shortName evidence="1">RNAP omega subunit</shortName>
        <ecNumber evidence="1">2.7.7.6</ecNumber>
    </recommendedName>
    <alternativeName>
        <fullName evidence="1">RNA polymerase omega subunit</fullName>
    </alternativeName>
    <alternativeName>
        <fullName evidence="1">Transcriptase subunit omega</fullName>
    </alternativeName>
</protein>
<accession>Q24TX5</accession>
<feature type="chain" id="PRO_1000005919" description="DNA-directed RNA polymerase subunit omega">
    <location>
        <begin position="1"/>
        <end position="68"/>
    </location>
</feature>
<reference key="1">
    <citation type="journal article" date="2006" name="J. Bacteriol.">
        <title>Complete genome sequence of the dehalorespiring bacterium Desulfitobacterium hafniense Y51 and comparison with Dehalococcoides ethenogenes 195.</title>
        <authorList>
            <person name="Nonaka H."/>
            <person name="Keresztes G."/>
            <person name="Shinoda Y."/>
            <person name="Ikenaga Y."/>
            <person name="Abe M."/>
            <person name="Naito K."/>
            <person name="Inatomi K."/>
            <person name="Furukawa K."/>
            <person name="Inui M."/>
            <person name="Yukawa H."/>
        </authorList>
    </citation>
    <scope>NUCLEOTIDE SEQUENCE [LARGE SCALE GENOMIC DNA]</scope>
    <source>
        <strain>Y51</strain>
    </source>
</reference>
<dbReference type="EC" id="2.7.7.6" evidence="1"/>
<dbReference type="EMBL" id="AP008230">
    <property type="protein sequence ID" value="BAE84517.1"/>
    <property type="molecule type" value="Genomic_DNA"/>
</dbReference>
<dbReference type="RefSeq" id="WP_005811864.1">
    <property type="nucleotide sequence ID" value="NC_007907.1"/>
</dbReference>
<dbReference type="SMR" id="Q24TX5"/>
<dbReference type="STRING" id="138119.DSY2728"/>
<dbReference type="KEGG" id="dsy:DSY2728"/>
<dbReference type="eggNOG" id="COG1758">
    <property type="taxonomic scope" value="Bacteria"/>
</dbReference>
<dbReference type="HOGENOM" id="CLU_125406_6_1_9"/>
<dbReference type="Proteomes" id="UP000001946">
    <property type="component" value="Chromosome"/>
</dbReference>
<dbReference type="GO" id="GO:0000428">
    <property type="term" value="C:DNA-directed RNA polymerase complex"/>
    <property type="evidence" value="ECO:0007669"/>
    <property type="project" value="UniProtKB-KW"/>
</dbReference>
<dbReference type="GO" id="GO:0003677">
    <property type="term" value="F:DNA binding"/>
    <property type="evidence" value="ECO:0007669"/>
    <property type="project" value="UniProtKB-UniRule"/>
</dbReference>
<dbReference type="GO" id="GO:0003899">
    <property type="term" value="F:DNA-directed RNA polymerase activity"/>
    <property type="evidence" value="ECO:0007669"/>
    <property type="project" value="UniProtKB-UniRule"/>
</dbReference>
<dbReference type="GO" id="GO:0006351">
    <property type="term" value="P:DNA-templated transcription"/>
    <property type="evidence" value="ECO:0007669"/>
    <property type="project" value="UniProtKB-UniRule"/>
</dbReference>
<dbReference type="Gene3D" id="3.90.940.10">
    <property type="match status" value="1"/>
</dbReference>
<dbReference type="HAMAP" id="MF_00366">
    <property type="entry name" value="RNApol_bact_RpoZ"/>
    <property type="match status" value="1"/>
</dbReference>
<dbReference type="InterPro" id="IPR003716">
    <property type="entry name" value="DNA-dir_RNA_pol_omega"/>
</dbReference>
<dbReference type="InterPro" id="IPR006110">
    <property type="entry name" value="Pol_omega/Rpo6/RPB6"/>
</dbReference>
<dbReference type="InterPro" id="IPR036161">
    <property type="entry name" value="RPB6/omega-like_sf"/>
</dbReference>
<dbReference type="NCBIfam" id="TIGR00690">
    <property type="entry name" value="rpoZ"/>
    <property type="match status" value="1"/>
</dbReference>
<dbReference type="PANTHER" id="PTHR34476">
    <property type="entry name" value="DNA-DIRECTED RNA POLYMERASE SUBUNIT OMEGA"/>
    <property type="match status" value="1"/>
</dbReference>
<dbReference type="PANTHER" id="PTHR34476:SF1">
    <property type="entry name" value="DNA-DIRECTED RNA POLYMERASE SUBUNIT OMEGA"/>
    <property type="match status" value="1"/>
</dbReference>
<dbReference type="Pfam" id="PF01192">
    <property type="entry name" value="RNA_pol_Rpb6"/>
    <property type="match status" value="1"/>
</dbReference>
<dbReference type="SMART" id="SM01409">
    <property type="entry name" value="RNA_pol_Rpb6"/>
    <property type="match status" value="1"/>
</dbReference>
<dbReference type="SUPFAM" id="SSF63562">
    <property type="entry name" value="RPB6/omega subunit-like"/>
    <property type="match status" value="1"/>
</dbReference>
<keyword id="KW-0240">DNA-directed RNA polymerase</keyword>
<keyword id="KW-0548">Nucleotidyltransferase</keyword>
<keyword id="KW-1185">Reference proteome</keyword>
<keyword id="KW-0804">Transcription</keyword>
<keyword id="KW-0808">Transferase</keyword>
<organism>
    <name type="scientific">Desulfitobacterium hafniense (strain Y51)</name>
    <dbReference type="NCBI Taxonomy" id="138119"/>
    <lineage>
        <taxon>Bacteria</taxon>
        <taxon>Bacillati</taxon>
        <taxon>Bacillota</taxon>
        <taxon>Clostridia</taxon>
        <taxon>Eubacteriales</taxon>
        <taxon>Desulfitobacteriaceae</taxon>
        <taxon>Desulfitobacterium</taxon>
    </lineage>
</organism>
<proteinExistence type="inferred from homology"/>
<comment type="function">
    <text evidence="1">Promotes RNA polymerase assembly. Latches the N- and C-terminal regions of the beta' subunit thereby facilitating its interaction with the beta and alpha subunits.</text>
</comment>
<comment type="catalytic activity">
    <reaction evidence="1">
        <text>RNA(n) + a ribonucleoside 5'-triphosphate = RNA(n+1) + diphosphate</text>
        <dbReference type="Rhea" id="RHEA:21248"/>
        <dbReference type="Rhea" id="RHEA-COMP:14527"/>
        <dbReference type="Rhea" id="RHEA-COMP:17342"/>
        <dbReference type="ChEBI" id="CHEBI:33019"/>
        <dbReference type="ChEBI" id="CHEBI:61557"/>
        <dbReference type="ChEBI" id="CHEBI:140395"/>
        <dbReference type="EC" id="2.7.7.6"/>
    </reaction>
</comment>
<comment type="subunit">
    <text evidence="1">The RNAP catalytic core consists of 2 alpha, 1 beta, 1 beta' and 1 omega subunit. When a sigma factor is associated with the core the holoenzyme is formed, which can initiate transcription.</text>
</comment>
<comment type="similarity">
    <text evidence="1">Belongs to the RNA polymerase subunit omega family.</text>
</comment>